<comment type="subunit">
    <text evidence="1">Interacts with MCU.</text>
</comment>
<comment type="subcellular location">
    <subcellularLocation>
        <location evidence="1">Mitochondrion membrane</location>
        <topology evidence="2">Single-pass membrane protein</topology>
    </subcellularLocation>
</comment>
<comment type="alternative products">
    <event type="alternative splicing"/>
    <isoform>
        <id>Q8C3X2-1</id>
        <name>1</name>
        <sequence type="displayed"/>
    </isoform>
    <isoform>
        <id>Q8C3X2-2</id>
        <name>2</name>
        <sequence type="described" ref="VSP_027004"/>
    </isoform>
</comment>
<comment type="similarity">
    <text evidence="4">Belongs to the CCDC90 family.</text>
</comment>
<feature type="transit peptide" description="Mitochondrion" evidence="2">
    <location>
        <begin position="1"/>
        <end position="42"/>
    </location>
</feature>
<feature type="chain" id="PRO_0000295696" description="Coiled-coil domain-containing protein 90B, mitochondrial">
    <location>
        <begin position="43"/>
        <end position="256"/>
    </location>
</feature>
<feature type="transmembrane region" description="Helical" evidence="2">
    <location>
        <begin position="231"/>
        <end position="253"/>
    </location>
</feature>
<feature type="coiled-coil region" evidence="2">
    <location>
        <begin position="129"/>
        <end position="167"/>
    </location>
</feature>
<feature type="splice variant" id="VSP_027004" description="In isoform 2." evidence="3">
    <location>
        <begin position="109"/>
        <end position="142"/>
    </location>
</feature>
<feature type="sequence conflict" description="In Ref. 1; BAB26248." evidence="4" ref="1">
    <original>G</original>
    <variation>C</variation>
    <location>
        <position position="15"/>
    </location>
</feature>
<organism>
    <name type="scientific">Mus musculus</name>
    <name type="common">Mouse</name>
    <dbReference type="NCBI Taxonomy" id="10090"/>
    <lineage>
        <taxon>Eukaryota</taxon>
        <taxon>Metazoa</taxon>
        <taxon>Chordata</taxon>
        <taxon>Craniata</taxon>
        <taxon>Vertebrata</taxon>
        <taxon>Euteleostomi</taxon>
        <taxon>Mammalia</taxon>
        <taxon>Eutheria</taxon>
        <taxon>Euarchontoglires</taxon>
        <taxon>Glires</taxon>
        <taxon>Rodentia</taxon>
        <taxon>Myomorpha</taxon>
        <taxon>Muroidea</taxon>
        <taxon>Muridae</taxon>
        <taxon>Murinae</taxon>
        <taxon>Mus</taxon>
        <taxon>Mus</taxon>
    </lineage>
</organism>
<dbReference type="EMBL" id="AK084673">
    <property type="protein sequence ID" value="BAC39246.1"/>
    <property type="molecule type" value="mRNA"/>
</dbReference>
<dbReference type="EMBL" id="AK009370">
    <property type="protein sequence ID" value="BAB26248.1"/>
    <property type="molecule type" value="mRNA"/>
</dbReference>
<dbReference type="EMBL" id="BC034878">
    <property type="protein sequence ID" value="AAH34878.1"/>
    <property type="molecule type" value="mRNA"/>
</dbReference>
<dbReference type="EMBL" id="BC115973">
    <property type="protein sequence ID" value="AAI15974.1"/>
    <property type="molecule type" value="mRNA"/>
</dbReference>
<dbReference type="CCDS" id="CCDS21449.1">
    <molecule id="Q8C3X2-1"/>
</dbReference>
<dbReference type="CCDS" id="CCDS52309.1">
    <molecule id="Q8C3X2-2"/>
</dbReference>
<dbReference type="RefSeq" id="NP_001156390.1">
    <molecule id="Q8C3X2-2"/>
    <property type="nucleotide sequence ID" value="NM_001162918.1"/>
</dbReference>
<dbReference type="RefSeq" id="NP_079791.2">
    <molecule id="Q8C3X2-1"/>
    <property type="nucleotide sequence ID" value="NM_025515.3"/>
</dbReference>
<dbReference type="SMR" id="Q8C3X2"/>
<dbReference type="BioGRID" id="211416">
    <property type="interactions" value="2"/>
</dbReference>
<dbReference type="FunCoup" id="Q8C3X2">
    <property type="interactions" value="2852"/>
</dbReference>
<dbReference type="IntAct" id="Q8C3X2">
    <property type="interactions" value="1"/>
</dbReference>
<dbReference type="MINT" id="Q8C3X2"/>
<dbReference type="STRING" id="10090.ENSMUSP00000032842"/>
<dbReference type="iPTMnet" id="Q8C3X2"/>
<dbReference type="PhosphoSitePlus" id="Q8C3X2"/>
<dbReference type="jPOST" id="Q8C3X2"/>
<dbReference type="PaxDb" id="10090-ENSMUSP00000032842"/>
<dbReference type="PeptideAtlas" id="Q8C3X2"/>
<dbReference type="ProteomicsDB" id="265302">
    <molecule id="Q8C3X2-1"/>
</dbReference>
<dbReference type="ProteomicsDB" id="265303">
    <molecule id="Q8C3X2-2"/>
</dbReference>
<dbReference type="Pumba" id="Q8C3X2"/>
<dbReference type="Antibodypedia" id="2471">
    <property type="antibodies" value="124 antibodies from 20 providers"/>
</dbReference>
<dbReference type="DNASU" id="66365"/>
<dbReference type="Ensembl" id="ENSMUST00000032842.13">
    <molecule id="Q8C3X2-1"/>
    <property type="protein sequence ID" value="ENSMUSP00000032842.7"/>
    <property type="gene ID" value="ENSMUSG00000030613.14"/>
</dbReference>
<dbReference type="Ensembl" id="ENSMUST00000085017.5">
    <molecule id="Q8C3X2-2"/>
    <property type="protein sequence ID" value="ENSMUSP00000082090.5"/>
    <property type="gene ID" value="ENSMUSG00000030613.14"/>
</dbReference>
<dbReference type="GeneID" id="66365"/>
<dbReference type="KEGG" id="mmu:66365"/>
<dbReference type="UCSC" id="uc009ihv.2">
    <molecule id="Q8C3X2-1"/>
    <property type="organism name" value="mouse"/>
</dbReference>
<dbReference type="UCSC" id="uc009ihw.2">
    <molecule id="Q8C3X2-2"/>
    <property type="organism name" value="mouse"/>
</dbReference>
<dbReference type="AGR" id="MGI:1913615"/>
<dbReference type="CTD" id="60492"/>
<dbReference type="MGI" id="MGI:1913615">
    <property type="gene designation" value="Ccdc90b"/>
</dbReference>
<dbReference type="VEuPathDB" id="HostDB:ENSMUSG00000030613"/>
<dbReference type="eggNOG" id="KOG3156">
    <property type="taxonomic scope" value="Eukaryota"/>
</dbReference>
<dbReference type="GeneTree" id="ENSGT00940000155453"/>
<dbReference type="HOGENOM" id="CLU_063283_1_0_1"/>
<dbReference type="InParanoid" id="Q8C3X2"/>
<dbReference type="OMA" id="MAYMRFR"/>
<dbReference type="OrthoDB" id="889336at2759"/>
<dbReference type="PhylomeDB" id="Q8C3X2"/>
<dbReference type="TreeFam" id="TF331442"/>
<dbReference type="BioGRID-ORCS" id="66365">
    <property type="hits" value="3 hits in 76 CRISPR screens"/>
</dbReference>
<dbReference type="ChiTaRS" id="Ccdc90b">
    <property type="organism name" value="mouse"/>
</dbReference>
<dbReference type="PRO" id="PR:Q8C3X2"/>
<dbReference type="Proteomes" id="UP000000589">
    <property type="component" value="Chromosome 7"/>
</dbReference>
<dbReference type="RNAct" id="Q8C3X2">
    <property type="molecule type" value="protein"/>
</dbReference>
<dbReference type="Bgee" id="ENSMUSG00000030613">
    <property type="expression patterns" value="Expressed in atrioventricular valve and 258 other cell types or tissues"/>
</dbReference>
<dbReference type="GO" id="GO:0031966">
    <property type="term" value="C:mitochondrial membrane"/>
    <property type="evidence" value="ECO:0007669"/>
    <property type="project" value="UniProtKB-SubCell"/>
</dbReference>
<dbReference type="GO" id="GO:0005739">
    <property type="term" value="C:mitochondrion"/>
    <property type="evidence" value="ECO:0007005"/>
    <property type="project" value="MGI"/>
</dbReference>
<dbReference type="FunFam" id="1.20.5.340:FF:000015">
    <property type="entry name" value="Mitochondrial calcium uniporter regulator 1"/>
    <property type="match status" value="1"/>
</dbReference>
<dbReference type="Gene3D" id="1.20.5.340">
    <property type="match status" value="1"/>
</dbReference>
<dbReference type="InterPro" id="IPR024461">
    <property type="entry name" value="CCDC90-like"/>
</dbReference>
<dbReference type="PANTHER" id="PTHR14360:SF14">
    <property type="entry name" value="COILED-COIL DOMAIN-CONTAINING PROTEIN 90B, MITOCHONDRIAL"/>
    <property type="match status" value="1"/>
</dbReference>
<dbReference type="PANTHER" id="PTHR14360">
    <property type="entry name" value="PROTEIN FMP32, MITOCHONDRIAL"/>
    <property type="match status" value="1"/>
</dbReference>
<dbReference type="Pfam" id="PF07798">
    <property type="entry name" value="CCDC90-like"/>
    <property type="match status" value="1"/>
</dbReference>
<gene>
    <name type="primary">Ccdc90b</name>
</gene>
<evidence type="ECO:0000250" key="1">
    <source>
        <dbReference type="UniProtKB" id="Q9GZT6"/>
    </source>
</evidence>
<evidence type="ECO:0000255" key="2"/>
<evidence type="ECO:0000303" key="3">
    <source>
    </source>
</evidence>
<evidence type="ECO:0000305" key="4"/>
<protein>
    <recommendedName>
        <fullName>Coiled-coil domain-containing protein 90B, mitochondrial</fullName>
    </recommendedName>
</protein>
<reference key="1">
    <citation type="journal article" date="2005" name="Science">
        <title>The transcriptional landscape of the mammalian genome.</title>
        <authorList>
            <person name="Carninci P."/>
            <person name="Kasukawa T."/>
            <person name="Katayama S."/>
            <person name="Gough J."/>
            <person name="Frith M.C."/>
            <person name="Maeda N."/>
            <person name="Oyama R."/>
            <person name="Ravasi T."/>
            <person name="Lenhard B."/>
            <person name="Wells C."/>
            <person name="Kodzius R."/>
            <person name="Shimokawa K."/>
            <person name="Bajic V.B."/>
            <person name="Brenner S.E."/>
            <person name="Batalov S."/>
            <person name="Forrest A.R."/>
            <person name="Zavolan M."/>
            <person name="Davis M.J."/>
            <person name="Wilming L.G."/>
            <person name="Aidinis V."/>
            <person name="Allen J.E."/>
            <person name="Ambesi-Impiombato A."/>
            <person name="Apweiler R."/>
            <person name="Aturaliya R.N."/>
            <person name="Bailey T.L."/>
            <person name="Bansal M."/>
            <person name="Baxter L."/>
            <person name="Beisel K.W."/>
            <person name="Bersano T."/>
            <person name="Bono H."/>
            <person name="Chalk A.M."/>
            <person name="Chiu K.P."/>
            <person name="Choudhary V."/>
            <person name="Christoffels A."/>
            <person name="Clutterbuck D.R."/>
            <person name="Crowe M.L."/>
            <person name="Dalla E."/>
            <person name="Dalrymple B.P."/>
            <person name="de Bono B."/>
            <person name="Della Gatta G."/>
            <person name="di Bernardo D."/>
            <person name="Down T."/>
            <person name="Engstrom P."/>
            <person name="Fagiolini M."/>
            <person name="Faulkner G."/>
            <person name="Fletcher C.F."/>
            <person name="Fukushima T."/>
            <person name="Furuno M."/>
            <person name="Futaki S."/>
            <person name="Gariboldi M."/>
            <person name="Georgii-Hemming P."/>
            <person name="Gingeras T.R."/>
            <person name="Gojobori T."/>
            <person name="Green R.E."/>
            <person name="Gustincich S."/>
            <person name="Harbers M."/>
            <person name="Hayashi Y."/>
            <person name="Hensch T.K."/>
            <person name="Hirokawa N."/>
            <person name="Hill D."/>
            <person name="Huminiecki L."/>
            <person name="Iacono M."/>
            <person name="Ikeo K."/>
            <person name="Iwama A."/>
            <person name="Ishikawa T."/>
            <person name="Jakt M."/>
            <person name="Kanapin A."/>
            <person name="Katoh M."/>
            <person name="Kawasawa Y."/>
            <person name="Kelso J."/>
            <person name="Kitamura H."/>
            <person name="Kitano H."/>
            <person name="Kollias G."/>
            <person name="Krishnan S.P."/>
            <person name="Kruger A."/>
            <person name="Kummerfeld S.K."/>
            <person name="Kurochkin I.V."/>
            <person name="Lareau L.F."/>
            <person name="Lazarevic D."/>
            <person name="Lipovich L."/>
            <person name="Liu J."/>
            <person name="Liuni S."/>
            <person name="McWilliam S."/>
            <person name="Madan Babu M."/>
            <person name="Madera M."/>
            <person name="Marchionni L."/>
            <person name="Matsuda H."/>
            <person name="Matsuzawa S."/>
            <person name="Miki H."/>
            <person name="Mignone F."/>
            <person name="Miyake S."/>
            <person name="Morris K."/>
            <person name="Mottagui-Tabar S."/>
            <person name="Mulder N."/>
            <person name="Nakano N."/>
            <person name="Nakauchi H."/>
            <person name="Ng P."/>
            <person name="Nilsson R."/>
            <person name="Nishiguchi S."/>
            <person name="Nishikawa S."/>
            <person name="Nori F."/>
            <person name="Ohara O."/>
            <person name="Okazaki Y."/>
            <person name="Orlando V."/>
            <person name="Pang K.C."/>
            <person name="Pavan W.J."/>
            <person name="Pavesi G."/>
            <person name="Pesole G."/>
            <person name="Petrovsky N."/>
            <person name="Piazza S."/>
            <person name="Reed J."/>
            <person name="Reid J.F."/>
            <person name="Ring B.Z."/>
            <person name="Ringwald M."/>
            <person name="Rost B."/>
            <person name="Ruan Y."/>
            <person name="Salzberg S.L."/>
            <person name="Sandelin A."/>
            <person name="Schneider C."/>
            <person name="Schoenbach C."/>
            <person name="Sekiguchi K."/>
            <person name="Semple C.A."/>
            <person name="Seno S."/>
            <person name="Sessa L."/>
            <person name="Sheng Y."/>
            <person name="Shibata Y."/>
            <person name="Shimada H."/>
            <person name="Shimada K."/>
            <person name="Silva D."/>
            <person name="Sinclair B."/>
            <person name="Sperling S."/>
            <person name="Stupka E."/>
            <person name="Sugiura K."/>
            <person name="Sultana R."/>
            <person name="Takenaka Y."/>
            <person name="Taki K."/>
            <person name="Tammoja K."/>
            <person name="Tan S.L."/>
            <person name="Tang S."/>
            <person name="Taylor M.S."/>
            <person name="Tegner J."/>
            <person name="Teichmann S.A."/>
            <person name="Ueda H.R."/>
            <person name="van Nimwegen E."/>
            <person name="Verardo R."/>
            <person name="Wei C.L."/>
            <person name="Yagi K."/>
            <person name="Yamanishi H."/>
            <person name="Zabarovsky E."/>
            <person name="Zhu S."/>
            <person name="Zimmer A."/>
            <person name="Hide W."/>
            <person name="Bult C."/>
            <person name="Grimmond S.M."/>
            <person name="Teasdale R.D."/>
            <person name="Liu E.T."/>
            <person name="Brusic V."/>
            <person name="Quackenbush J."/>
            <person name="Wahlestedt C."/>
            <person name="Mattick J.S."/>
            <person name="Hume D.A."/>
            <person name="Kai C."/>
            <person name="Sasaki D."/>
            <person name="Tomaru Y."/>
            <person name="Fukuda S."/>
            <person name="Kanamori-Katayama M."/>
            <person name="Suzuki M."/>
            <person name="Aoki J."/>
            <person name="Arakawa T."/>
            <person name="Iida J."/>
            <person name="Imamura K."/>
            <person name="Itoh M."/>
            <person name="Kato T."/>
            <person name="Kawaji H."/>
            <person name="Kawagashira N."/>
            <person name="Kawashima T."/>
            <person name="Kojima M."/>
            <person name="Kondo S."/>
            <person name="Konno H."/>
            <person name="Nakano K."/>
            <person name="Ninomiya N."/>
            <person name="Nishio T."/>
            <person name="Okada M."/>
            <person name="Plessy C."/>
            <person name="Shibata K."/>
            <person name="Shiraki T."/>
            <person name="Suzuki S."/>
            <person name="Tagami M."/>
            <person name="Waki K."/>
            <person name="Watahiki A."/>
            <person name="Okamura-Oho Y."/>
            <person name="Suzuki H."/>
            <person name="Kawai J."/>
            <person name="Hayashizaki Y."/>
        </authorList>
    </citation>
    <scope>NUCLEOTIDE SEQUENCE [LARGE SCALE MRNA] (ISOFORM 1)</scope>
    <source>
        <strain>C57BL/6J</strain>
        <tissue>Heart</tissue>
        <tissue>Tongue</tissue>
    </source>
</reference>
<reference key="2">
    <citation type="journal article" date="2004" name="Genome Res.">
        <title>The status, quality, and expansion of the NIH full-length cDNA project: the Mammalian Gene Collection (MGC).</title>
        <authorList>
            <consortium name="The MGC Project Team"/>
        </authorList>
    </citation>
    <scope>NUCLEOTIDE SEQUENCE [LARGE SCALE MRNA] (ISOFORM 2)</scope>
    <source>
        <tissue>Mammary gland</tissue>
    </source>
</reference>
<reference key="3">
    <citation type="journal article" date="2010" name="Cell">
        <title>A tissue-specific atlas of mouse protein phosphorylation and expression.</title>
        <authorList>
            <person name="Huttlin E.L."/>
            <person name="Jedrychowski M.P."/>
            <person name="Elias J.E."/>
            <person name="Goswami T."/>
            <person name="Rad R."/>
            <person name="Beausoleil S.A."/>
            <person name="Villen J."/>
            <person name="Haas W."/>
            <person name="Sowa M.E."/>
            <person name="Gygi S.P."/>
        </authorList>
    </citation>
    <scope>IDENTIFICATION BY MASS SPECTROMETRY [LARGE SCALE ANALYSIS]</scope>
    <source>
        <tissue>Brown adipose tissue</tissue>
        <tissue>Heart</tissue>
        <tissue>Kidney</tissue>
        <tissue>Liver</tissue>
        <tissue>Spleen</tissue>
    </source>
</reference>
<sequence length="256" mass="29597">MRSRWIWRFLRPDGGGIRWTSTPHGRLSPALRRGFLTTTTKSDYDRRPVDITPLEQRKLTFDTHALVQDLETHGFDKTQAQTIVSVLSTLSNVSLDTIYKEMVTKAQQEITVQQLMAHLDSIRKDMVILEKSEFANLRAENEKMKIELDQVKQQLTNETSRIRADNKLDINLERSRVTDMFTDQEKQLIEATNEFAKKDTQTKSIISETSNKIDTEIASLKTLMESSKLETIRYLAASVFTCLAIALGFYRFWKEN</sequence>
<keyword id="KW-0025">Alternative splicing</keyword>
<keyword id="KW-0175">Coiled coil</keyword>
<keyword id="KW-0472">Membrane</keyword>
<keyword id="KW-0496">Mitochondrion</keyword>
<keyword id="KW-1185">Reference proteome</keyword>
<keyword id="KW-0809">Transit peptide</keyword>
<keyword id="KW-0812">Transmembrane</keyword>
<keyword id="KW-1133">Transmembrane helix</keyword>
<name>CC90B_MOUSE</name>
<proteinExistence type="evidence at protein level"/>
<accession>Q8C3X2</accession>
<accession>Q8JZY3</accession>
<accession>Q9D7C1</accession>